<reference key="1">
    <citation type="journal article" date="2001" name="Proc. Natl. Acad. Sci. U.S.A.">
        <title>The complete genome of the crenarchaeon Sulfolobus solfataricus P2.</title>
        <authorList>
            <person name="She Q."/>
            <person name="Singh R.K."/>
            <person name="Confalonieri F."/>
            <person name="Zivanovic Y."/>
            <person name="Allard G."/>
            <person name="Awayez M.J."/>
            <person name="Chan-Weiher C.C.-Y."/>
            <person name="Clausen I.G."/>
            <person name="Curtis B.A."/>
            <person name="De Moors A."/>
            <person name="Erauso G."/>
            <person name="Fletcher C."/>
            <person name="Gordon P.M.K."/>
            <person name="Heikamp-de Jong I."/>
            <person name="Jeffries A.C."/>
            <person name="Kozera C.J."/>
            <person name="Medina N."/>
            <person name="Peng X."/>
            <person name="Thi-Ngoc H.P."/>
            <person name="Redder P."/>
            <person name="Schenk M.E."/>
            <person name="Theriault C."/>
            <person name="Tolstrup N."/>
            <person name="Charlebois R.L."/>
            <person name="Doolittle W.F."/>
            <person name="Duguet M."/>
            <person name="Gaasterland T."/>
            <person name="Garrett R.A."/>
            <person name="Ragan M.A."/>
            <person name="Sensen C.W."/>
            <person name="Van der Oost J."/>
        </authorList>
    </citation>
    <scope>NUCLEOTIDE SEQUENCE [LARGE SCALE GENOMIC DNA]</scope>
    <source>
        <strain>ATCC 35092 / DSM 1617 / JCM 11322 / P2</strain>
    </source>
</reference>
<keyword id="KW-0450">Lipoyl</keyword>
<keyword id="KW-1185">Reference proteome</keyword>
<name>GCSH1_SACS2</name>
<accession>Q97ZI6</accession>
<organism>
    <name type="scientific">Saccharolobus solfataricus (strain ATCC 35092 / DSM 1617 / JCM 11322 / P2)</name>
    <name type="common">Sulfolobus solfataricus</name>
    <dbReference type="NCBI Taxonomy" id="273057"/>
    <lineage>
        <taxon>Archaea</taxon>
        <taxon>Thermoproteota</taxon>
        <taxon>Thermoprotei</taxon>
        <taxon>Sulfolobales</taxon>
        <taxon>Sulfolobaceae</taxon>
        <taxon>Saccharolobus</taxon>
    </lineage>
</organism>
<evidence type="ECO:0000255" key="1">
    <source>
        <dbReference type="HAMAP-Rule" id="MF_00272"/>
    </source>
</evidence>
<evidence type="ECO:0000255" key="2">
    <source>
        <dbReference type="PROSITE-ProRule" id="PRU01066"/>
    </source>
</evidence>
<proteinExistence type="inferred from homology"/>
<dbReference type="EMBL" id="AE006641">
    <property type="protein sequence ID" value="AAK41202.1"/>
    <property type="molecule type" value="Genomic_DNA"/>
</dbReference>
<dbReference type="PIR" id="C90243">
    <property type="entry name" value="C90243"/>
</dbReference>
<dbReference type="SMR" id="Q97ZI6"/>
<dbReference type="FunCoup" id="Q97ZI6">
    <property type="interactions" value="245"/>
</dbReference>
<dbReference type="STRING" id="273057.SSO0920"/>
<dbReference type="PaxDb" id="273057-SSO0920"/>
<dbReference type="EnsemblBacteria" id="AAK41202">
    <property type="protein sequence ID" value="AAK41202"/>
    <property type="gene ID" value="SSO0920"/>
</dbReference>
<dbReference type="KEGG" id="sso:SSO0920"/>
<dbReference type="PATRIC" id="fig|273057.12.peg.921"/>
<dbReference type="eggNOG" id="arCOG01303">
    <property type="taxonomic scope" value="Archaea"/>
</dbReference>
<dbReference type="HOGENOM" id="CLU_097408_2_2_2"/>
<dbReference type="InParanoid" id="Q97ZI6"/>
<dbReference type="PhylomeDB" id="Q97ZI6"/>
<dbReference type="Proteomes" id="UP000001974">
    <property type="component" value="Chromosome"/>
</dbReference>
<dbReference type="GO" id="GO:0005960">
    <property type="term" value="C:glycine cleavage complex"/>
    <property type="evidence" value="ECO:0007669"/>
    <property type="project" value="InterPro"/>
</dbReference>
<dbReference type="GO" id="GO:0019464">
    <property type="term" value="P:glycine decarboxylation via glycine cleavage system"/>
    <property type="evidence" value="ECO:0007669"/>
    <property type="project" value="UniProtKB-UniRule"/>
</dbReference>
<dbReference type="CDD" id="cd06848">
    <property type="entry name" value="GCS_H"/>
    <property type="match status" value="1"/>
</dbReference>
<dbReference type="Gene3D" id="2.40.50.100">
    <property type="match status" value="1"/>
</dbReference>
<dbReference type="HAMAP" id="MF_00272">
    <property type="entry name" value="GcvH"/>
    <property type="match status" value="1"/>
</dbReference>
<dbReference type="InterPro" id="IPR000089">
    <property type="entry name" value="Biotin_lipoyl"/>
</dbReference>
<dbReference type="InterPro" id="IPR002930">
    <property type="entry name" value="GCV_H"/>
</dbReference>
<dbReference type="InterPro" id="IPR033753">
    <property type="entry name" value="GCV_H/Fam206"/>
</dbReference>
<dbReference type="InterPro" id="IPR017453">
    <property type="entry name" value="GCV_H_sub"/>
</dbReference>
<dbReference type="InterPro" id="IPR011053">
    <property type="entry name" value="Single_hybrid_motif"/>
</dbReference>
<dbReference type="NCBIfam" id="TIGR00527">
    <property type="entry name" value="gcvH"/>
    <property type="match status" value="1"/>
</dbReference>
<dbReference type="NCBIfam" id="NF002270">
    <property type="entry name" value="PRK01202.1"/>
    <property type="match status" value="1"/>
</dbReference>
<dbReference type="PANTHER" id="PTHR11715">
    <property type="entry name" value="GLYCINE CLEAVAGE SYSTEM H PROTEIN"/>
    <property type="match status" value="1"/>
</dbReference>
<dbReference type="PANTHER" id="PTHR11715:SF3">
    <property type="entry name" value="GLYCINE CLEAVAGE SYSTEM H PROTEIN-RELATED"/>
    <property type="match status" value="1"/>
</dbReference>
<dbReference type="Pfam" id="PF01597">
    <property type="entry name" value="GCV_H"/>
    <property type="match status" value="1"/>
</dbReference>
<dbReference type="SUPFAM" id="SSF51230">
    <property type="entry name" value="Single hybrid motif"/>
    <property type="match status" value="1"/>
</dbReference>
<dbReference type="PROSITE" id="PS50968">
    <property type="entry name" value="BIOTINYL_LIPOYL"/>
    <property type="match status" value="1"/>
</dbReference>
<sequence length="137" mass="15345">MNEMKVGRYVVLTDRLYTETDEWVVLSNDNVAVIGITDYAQKKLRDIVGIELPQLQKEVKAGESVGVIESVKAAADIFSPLSGIIVEVNNKLLEHPEIINKDPYGEGWIFKLKASKLSEEKEKLLSPEKYIEKIKGG</sequence>
<protein>
    <recommendedName>
        <fullName evidence="1">Probable glycine cleavage system H protein 1</fullName>
    </recommendedName>
</protein>
<gene>
    <name evidence="1" type="primary">gcvH1</name>
    <name type="ordered locus">SSO0920</name>
</gene>
<comment type="function">
    <text evidence="1">The glycine cleavage system catalyzes the degradation of glycine. The H protein shuttles the methylamine group of glycine from the P protein to the T protein.</text>
</comment>
<comment type="cofactor">
    <cofactor evidence="1">
        <name>(R)-lipoate</name>
        <dbReference type="ChEBI" id="CHEBI:83088"/>
    </cofactor>
    <text evidence="1">Binds 1 lipoyl cofactor covalently.</text>
</comment>
<comment type="subunit">
    <text evidence="1">The glycine cleavage system is composed of four proteins: P, T, L and H.</text>
</comment>
<comment type="similarity">
    <text evidence="1">Belongs to the GcvH family.</text>
</comment>
<feature type="chain" id="PRO_0000166282" description="Probable glycine cleavage system H protein 1">
    <location>
        <begin position="1"/>
        <end position="137"/>
    </location>
</feature>
<feature type="domain" description="Lipoyl-binding" evidence="2">
    <location>
        <begin position="31"/>
        <end position="113"/>
    </location>
</feature>
<feature type="modified residue" description="N6-lipoyllysine" evidence="1">
    <location>
        <position position="72"/>
    </location>
</feature>